<protein>
    <recommendedName>
        <fullName evidence="5">Dihydromonapterin reductase</fullName>
        <shortName evidence="5">H(2)-MPt reductase</shortName>
        <ecNumber evidence="3">1.5.1.50</ecNumber>
    </recommendedName>
    <alternativeName>
        <fullName evidence="4">Dihydrofolate reductase</fullName>
        <shortName>DHFR</shortName>
        <ecNumber evidence="2">1.5.1.3</ecNumber>
    </alternativeName>
</protein>
<organism>
    <name type="scientific">Escherichia coli (strain K12)</name>
    <dbReference type="NCBI Taxonomy" id="83333"/>
    <lineage>
        <taxon>Bacteria</taxon>
        <taxon>Pseudomonadati</taxon>
        <taxon>Pseudomonadota</taxon>
        <taxon>Gammaproteobacteria</taxon>
        <taxon>Enterobacterales</taxon>
        <taxon>Enterobacteriaceae</taxon>
        <taxon>Escherichia</taxon>
    </lineage>
</organism>
<comment type="function">
    <text evidence="3">Catalyzes the reduction of dihydromonapterin to tetrahydromonapterin. Also has lower activity with dihydrofolate.</text>
</comment>
<comment type="catalytic activity">
    <reaction evidence="2">
        <text>(6S)-5,6,7,8-tetrahydrofolate + NADP(+) = 7,8-dihydrofolate + NADPH + H(+)</text>
        <dbReference type="Rhea" id="RHEA:15009"/>
        <dbReference type="ChEBI" id="CHEBI:15378"/>
        <dbReference type="ChEBI" id="CHEBI:57451"/>
        <dbReference type="ChEBI" id="CHEBI:57453"/>
        <dbReference type="ChEBI" id="CHEBI:57783"/>
        <dbReference type="ChEBI" id="CHEBI:58349"/>
        <dbReference type="EC" id="1.5.1.3"/>
    </reaction>
</comment>
<comment type="catalytic activity">
    <reaction evidence="3">
        <text>7,8-dihydromonapterin + NADPH + H(+) = 5,6,7,8-tetrahydromonapterin + NADP(+)</text>
        <dbReference type="Rhea" id="RHEA:34847"/>
        <dbReference type="ChEBI" id="CHEBI:15378"/>
        <dbReference type="ChEBI" id="CHEBI:57783"/>
        <dbReference type="ChEBI" id="CHEBI:58349"/>
        <dbReference type="ChEBI" id="CHEBI:71175"/>
        <dbReference type="ChEBI" id="CHEBI:71177"/>
        <dbReference type="EC" id="1.5.1.50"/>
    </reaction>
</comment>
<comment type="activity regulation">
    <text evidence="2">Inhibited by methotrexate.</text>
</comment>
<comment type="biophysicochemical properties">
    <kinetics>
        <KM evidence="2">9.5 uM for 7,8-dihydrofolate (at pH 6.0)</KM>
        <KM evidence="3">147 uM for 7,8-dihydromonapterin (at pH 6.0)</KM>
        <KM evidence="2">1.9 uM for NADPH (at pH 6.0)</KM>
        <Vmax evidence="2">0.083 umol/min/mg enzyme with 7,8-dihydrofolate as substrate</Vmax>
        <Vmax evidence="3">5.99 umol/min/mg enzyme with 7,8-dihydromoapterin as substrate</Vmax>
    </kinetics>
    <phDependence>
        <text evidence="2">Optimum pH is 4.7.</text>
    </phDependence>
</comment>
<comment type="similarity">
    <text evidence="6">Belongs to the short-chain dehydrogenases/reductases (SDR) family. FolM subfamily.</text>
</comment>
<dbReference type="EC" id="1.5.1.50" evidence="3"/>
<dbReference type="EC" id="1.5.1.3" evidence="2"/>
<dbReference type="EMBL" id="U00096">
    <property type="protein sequence ID" value="AAC74678.1"/>
    <property type="molecule type" value="Genomic_DNA"/>
</dbReference>
<dbReference type="EMBL" id="AP009048">
    <property type="protein sequence ID" value="BAA15344.1"/>
    <property type="molecule type" value="Genomic_DNA"/>
</dbReference>
<dbReference type="EMBL" id="U41101">
    <property type="status" value="NOT_ANNOTATED_CDS"/>
    <property type="molecule type" value="Genomic_DNA"/>
</dbReference>
<dbReference type="PIR" id="H64916">
    <property type="entry name" value="H64916"/>
</dbReference>
<dbReference type="RefSeq" id="NP_416123.1">
    <property type="nucleotide sequence ID" value="NC_000913.3"/>
</dbReference>
<dbReference type="RefSeq" id="WP_000520804.1">
    <property type="nucleotide sequence ID" value="NZ_SSZK01000001.1"/>
</dbReference>
<dbReference type="SMR" id="P0AFS3"/>
<dbReference type="BioGRID" id="4262123">
    <property type="interactions" value="124"/>
</dbReference>
<dbReference type="DIP" id="DIP-47981N"/>
<dbReference type="FunCoup" id="P0AFS3">
    <property type="interactions" value="41"/>
</dbReference>
<dbReference type="IntAct" id="P0AFS3">
    <property type="interactions" value="5"/>
</dbReference>
<dbReference type="STRING" id="511145.b1606"/>
<dbReference type="jPOST" id="P0AFS3"/>
<dbReference type="PaxDb" id="511145-b1606"/>
<dbReference type="EnsemblBacteria" id="AAC74678">
    <property type="protein sequence ID" value="AAC74678"/>
    <property type="gene ID" value="b1606"/>
</dbReference>
<dbReference type="GeneID" id="949096"/>
<dbReference type="KEGG" id="ecj:JW1598"/>
<dbReference type="KEGG" id="eco:b1606"/>
<dbReference type="KEGG" id="ecoc:C3026_09245"/>
<dbReference type="PATRIC" id="fig|1411691.4.peg.656"/>
<dbReference type="EchoBASE" id="EB2981"/>
<dbReference type="eggNOG" id="COG1028">
    <property type="taxonomic scope" value="Bacteria"/>
</dbReference>
<dbReference type="HOGENOM" id="CLU_010194_1_3_6"/>
<dbReference type="InParanoid" id="P0AFS3"/>
<dbReference type="OMA" id="QIHVHAP"/>
<dbReference type="OrthoDB" id="9793499at2"/>
<dbReference type="PhylomeDB" id="P0AFS3"/>
<dbReference type="BioCyc" id="EcoCyc:G6862-MONOMER"/>
<dbReference type="BioCyc" id="MetaCyc:G6862-MONOMER"/>
<dbReference type="BRENDA" id="1.5.1.50">
    <property type="organism ID" value="2026"/>
</dbReference>
<dbReference type="SABIO-RK" id="P0AFS3"/>
<dbReference type="PRO" id="PR:P0AFS3"/>
<dbReference type="Proteomes" id="UP000000625">
    <property type="component" value="Chromosome"/>
</dbReference>
<dbReference type="GO" id="GO:0004146">
    <property type="term" value="F:dihydrofolate reductase activity"/>
    <property type="evidence" value="ECO:0000314"/>
    <property type="project" value="EcoCyc"/>
</dbReference>
<dbReference type="GO" id="GO:0071172">
    <property type="term" value="F:dihydromonapterin reductase activity"/>
    <property type="evidence" value="ECO:0000314"/>
    <property type="project" value="EcoCyc"/>
</dbReference>
<dbReference type="GO" id="GO:0042802">
    <property type="term" value="F:identical protein binding"/>
    <property type="evidence" value="ECO:0000314"/>
    <property type="project" value="EcoCyc"/>
</dbReference>
<dbReference type="GO" id="GO:0009257">
    <property type="term" value="P:10-formyltetrahydrofolate biosynthetic process"/>
    <property type="evidence" value="ECO:0000269"/>
    <property type="project" value="EcoCyc"/>
</dbReference>
<dbReference type="GO" id="GO:0046656">
    <property type="term" value="P:folic acid biosynthetic process"/>
    <property type="evidence" value="ECO:0000269"/>
    <property type="project" value="EcoCyc"/>
</dbReference>
<dbReference type="GO" id="GO:0006730">
    <property type="term" value="P:one-carbon metabolic process"/>
    <property type="evidence" value="ECO:0007669"/>
    <property type="project" value="UniProtKB-KW"/>
</dbReference>
<dbReference type="GO" id="GO:0051289">
    <property type="term" value="P:protein homotetramerization"/>
    <property type="evidence" value="ECO:0000314"/>
    <property type="project" value="EcoCyc"/>
</dbReference>
<dbReference type="GO" id="GO:0042559">
    <property type="term" value="P:pteridine-containing compound biosynthetic process"/>
    <property type="evidence" value="ECO:0000315"/>
    <property type="project" value="EcoCyc"/>
</dbReference>
<dbReference type="CDD" id="cd05357">
    <property type="entry name" value="PR_SDR_c"/>
    <property type="match status" value="1"/>
</dbReference>
<dbReference type="FunFam" id="3.40.50.720:FF:000225">
    <property type="entry name" value="Dihydrofolate reductase FolM"/>
    <property type="match status" value="1"/>
</dbReference>
<dbReference type="Gene3D" id="3.40.50.720">
    <property type="entry name" value="NAD(P)-binding Rossmann-like Domain"/>
    <property type="match status" value="1"/>
</dbReference>
<dbReference type="InterPro" id="IPR036291">
    <property type="entry name" value="NAD(P)-bd_dom_sf"/>
</dbReference>
<dbReference type="InterPro" id="IPR020904">
    <property type="entry name" value="Sc_DH/Rdtase_CS"/>
</dbReference>
<dbReference type="InterPro" id="IPR002347">
    <property type="entry name" value="SDR_fam"/>
</dbReference>
<dbReference type="NCBIfam" id="NF005066">
    <property type="entry name" value="PRK06483.1"/>
    <property type="match status" value="1"/>
</dbReference>
<dbReference type="PANTHER" id="PTHR43639:SF6">
    <property type="entry name" value="DIHYDROMONAPTERIN REDUCTASE"/>
    <property type="match status" value="1"/>
</dbReference>
<dbReference type="PANTHER" id="PTHR43639">
    <property type="entry name" value="OXIDOREDUCTASE, SHORT-CHAIN DEHYDROGENASE/REDUCTASE FAMILY (AFU_ORTHOLOGUE AFUA_5G02870)"/>
    <property type="match status" value="1"/>
</dbReference>
<dbReference type="Pfam" id="PF13561">
    <property type="entry name" value="adh_short_C2"/>
    <property type="match status" value="1"/>
</dbReference>
<dbReference type="PRINTS" id="PR00081">
    <property type="entry name" value="GDHRDH"/>
</dbReference>
<dbReference type="SUPFAM" id="SSF51735">
    <property type="entry name" value="NAD(P)-binding Rossmann-fold domains"/>
    <property type="match status" value="1"/>
</dbReference>
<dbReference type="PROSITE" id="PS00061">
    <property type="entry name" value="ADH_SHORT"/>
    <property type="match status" value="1"/>
</dbReference>
<feature type="chain" id="PRO_0000054833" description="Dihydromonapterin reductase">
    <location>
        <begin position="1"/>
        <end position="240"/>
    </location>
</feature>
<feature type="active site" description="Proton acceptor" evidence="1">
    <location>
        <position position="152"/>
    </location>
</feature>
<feature type="sequence conflict" description="In Ref. 4." evidence="6" ref="4">
    <original>E</original>
    <variation>Q</variation>
    <location>
        <position position="210"/>
    </location>
</feature>
<reference key="1">
    <citation type="journal article" date="1996" name="DNA Res.">
        <title>A 570-kb DNA sequence of the Escherichia coli K-12 genome corresponding to the 28.0-40.1 min region on the linkage map.</title>
        <authorList>
            <person name="Aiba H."/>
            <person name="Baba T."/>
            <person name="Fujita K."/>
            <person name="Hayashi K."/>
            <person name="Inada T."/>
            <person name="Isono K."/>
            <person name="Itoh T."/>
            <person name="Kasai H."/>
            <person name="Kashimoto K."/>
            <person name="Kimura S."/>
            <person name="Kitakawa M."/>
            <person name="Kitagawa M."/>
            <person name="Makino K."/>
            <person name="Miki T."/>
            <person name="Mizobuchi K."/>
            <person name="Mori H."/>
            <person name="Mori T."/>
            <person name="Motomura K."/>
            <person name="Nakade S."/>
            <person name="Nakamura Y."/>
            <person name="Nashimoto H."/>
            <person name="Nishio Y."/>
            <person name="Oshima T."/>
            <person name="Saito N."/>
            <person name="Sampei G."/>
            <person name="Seki Y."/>
            <person name="Sivasundaram S."/>
            <person name="Tagami H."/>
            <person name="Takeda J."/>
            <person name="Takemoto K."/>
            <person name="Takeuchi Y."/>
            <person name="Wada C."/>
            <person name="Yamamoto Y."/>
            <person name="Horiuchi T."/>
        </authorList>
    </citation>
    <scope>NUCLEOTIDE SEQUENCE [LARGE SCALE GENOMIC DNA]</scope>
    <source>
        <strain>K12 / W3110 / ATCC 27325 / DSM 5911</strain>
    </source>
</reference>
<reference key="2">
    <citation type="journal article" date="1997" name="Science">
        <title>The complete genome sequence of Escherichia coli K-12.</title>
        <authorList>
            <person name="Blattner F.R."/>
            <person name="Plunkett G. III"/>
            <person name="Bloch C.A."/>
            <person name="Perna N.T."/>
            <person name="Burland V."/>
            <person name="Riley M."/>
            <person name="Collado-Vides J."/>
            <person name="Glasner J.D."/>
            <person name="Rode C.K."/>
            <person name="Mayhew G.F."/>
            <person name="Gregor J."/>
            <person name="Davis N.W."/>
            <person name="Kirkpatrick H.A."/>
            <person name="Goeden M.A."/>
            <person name="Rose D.J."/>
            <person name="Mau B."/>
            <person name="Shao Y."/>
        </authorList>
    </citation>
    <scope>NUCLEOTIDE SEQUENCE [LARGE SCALE GENOMIC DNA]</scope>
    <source>
        <strain>K12 / MG1655 / ATCC 47076</strain>
    </source>
</reference>
<reference key="3">
    <citation type="journal article" date="2006" name="Mol. Syst. Biol.">
        <title>Highly accurate genome sequences of Escherichia coli K-12 strains MG1655 and W3110.</title>
        <authorList>
            <person name="Hayashi K."/>
            <person name="Morooka N."/>
            <person name="Yamamoto Y."/>
            <person name="Fujita K."/>
            <person name="Isono K."/>
            <person name="Choi S."/>
            <person name="Ohtsubo E."/>
            <person name="Baba T."/>
            <person name="Wanner B.L."/>
            <person name="Mori H."/>
            <person name="Horiuchi T."/>
        </authorList>
    </citation>
    <scope>NUCLEOTIDE SEQUENCE [LARGE SCALE GENOMIC DNA]</scope>
    <source>
        <strain>K12 / W3110 / ATCC 27325 / DSM 5911</strain>
    </source>
</reference>
<reference key="4">
    <citation type="submission" date="1995-11" db="EMBL/GenBank/DDBJ databases">
        <authorList>
            <person name="Kuempel P.L."/>
        </authorList>
    </citation>
    <scope>NUCLEOTIDE SEQUENCE [GENOMIC DNA] OF 179-240</scope>
    <source>
        <strain>K12</strain>
    </source>
</reference>
<reference key="5">
    <citation type="journal article" date="2003" name="J. Bacteriol.">
        <title>FolM, a new chromosomally encoded dihydrofolate reductase in Escherichia coli.</title>
        <authorList>
            <person name="Giladi M."/>
            <person name="Altman-Price N."/>
            <person name="Levin I."/>
            <person name="Levy L."/>
            <person name="Mevarech M."/>
        </authorList>
    </citation>
    <scope>CATALYTIC ACTIVITY</scope>
    <scope>ACTIVITY REGULATION</scope>
    <scope>BIOPHYSICOCHEMICAL PROPERTIES</scope>
    <source>
        <strain>K12 / MG1655 / ATCC 47076</strain>
    </source>
</reference>
<reference key="6">
    <citation type="journal article" date="2010" name="J. Bacteriol.">
        <title>FolX and FolM are essential for tetrahydromonapterin synthesis in Escherichia coli and Pseudomonas aeruginosa.</title>
        <authorList>
            <person name="Pribat A."/>
            <person name="Blaby I.K."/>
            <person name="Lara-Nunez A."/>
            <person name="Gregory J.F."/>
            <person name="de Crecy-Lagard V."/>
            <person name="Hanson A.D."/>
        </authorList>
    </citation>
    <scope>FUNCTION</scope>
    <scope>CATALYTIC ACTIVITY</scope>
    <scope>BIOPHYSICOCHEMICAL PROPERTIES</scope>
    <source>
        <strain>K12 / MG1655 / ATCC 47076</strain>
    </source>
</reference>
<accession>P0AFS3</accession>
<accession>P52109</accession>
<accession>P77386</accession>
<evidence type="ECO:0000255" key="1">
    <source>
        <dbReference type="PROSITE-ProRule" id="PRU10001"/>
    </source>
</evidence>
<evidence type="ECO:0000269" key="2">
    <source>
    </source>
</evidence>
<evidence type="ECO:0000269" key="3">
    <source>
    </source>
</evidence>
<evidence type="ECO:0000303" key="4">
    <source>
    </source>
</evidence>
<evidence type="ECO:0000303" key="5">
    <source>
    </source>
</evidence>
<evidence type="ECO:0000305" key="6"/>
<keyword id="KW-0521">NADP</keyword>
<keyword id="KW-0554">One-carbon metabolism</keyword>
<keyword id="KW-0560">Oxidoreductase</keyword>
<keyword id="KW-1185">Reference proteome</keyword>
<gene>
    <name evidence="4" type="primary">folM</name>
    <name type="synonym">ydgB</name>
    <name type="ordered locus">b1606</name>
    <name type="ordered locus">JW1598</name>
</gene>
<name>FOLM_ECOLI</name>
<sequence>MGKTQPLPILITGGGRRIGLALAWHFINQKQPVIVSYRTHYPAIDGLINAGAQCIQADFSTNDGVMAFADEVLKSTHGLRAILHNASAWMAEKPGAPLADVLACMMQIHVNTPYLLNHALERLLRGHGHAASDIIHFTDYVVERGSDKHIAYAASKAALDNMTRSFARKLAPEVKVNSIAPSLILFNEHDDAEYRQQALNKSLMKTAPGEKEVIDLVDYLLTSCFVTGRSFPLDGGRHLR</sequence>
<proteinExistence type="evidence at protein level"/>